<gene>
    <name evidence="1" type="primary">rpsC</name>
    <name type="ordered locus">PA0581</name>
</gene>
<sequence length="250" mass="28548">MGQKTNPNGLRLGIIRTWDSQWCVNDKEIPALIKEDFLIRQLINNFSKRNSISQIEIQRLKEKTKNRITITIHTAKPGIIIGKDGETRNKIQAQLKKLTQKDINLNILEVKNPDKTAVLVAQNMAEQLENRMKFRRVQKMAIQKAFKAGAKGIKVLISGRLNGDEIARSERHDEGRVPLHTLRADIDYAALEAHTTYGVLGIKVWIFHGEVLPGQTILDTRKPFVSQNKFIKRPRYFKGGKNNHVDAKEN</sequence>
<comment type="function">
    <text evidence="1">Binds the lower part of the 30S subunit head. Binds mRNA in the 70S ribosome, positioning it for translation.</text>
</comment>
<comment type="subunit">
    <text evidence="1">Part of the 30S ribosomal subunit. Forms a tight complex with proteins S10 and S14.</text>
</comment>
<comment type="similarity">
    <text evidence="1">Belongs to the universal ribosomal protein uS3 family.</text>
</comment>
<feature type="chain" id="PRO_1000141001" description="Small ribosomal subunit protein uS3">
    <location>
        <begin position="1"/>
        <end position="250"/>
    </location>
</feature>
<feature type="domain" description="KH type-2" evidence="1">
    <location>
        <begin position="39"/>
        <end position="111"/>
    </location>
</feature>
<dbReference type="EMBL" id="AM422018">
    <property type="protein sequence ID" value="CAM11915.1"/>
    <property type="molecule type" value="Genomic_DNA"/>
</dbReference>
<dbReference type="SMR" id="B1VAE2"/>
<dbReference type="STRING" id="59748.PA0581"/>
<dbReference type="KEGG" id="pal:PA0581"/>
<dbReference type="eggNOG" id="COG0092">
    <property type="taxonomic scope" value="Bacteria"/>
</dbReference>
<dbReference type="Proteomes" id="UP000008323">
    <property type="component" value="Chromosome"/>
</dbReference>
<dbReference type="GO" id="GO:0022627">
    <property type="term" value="C:cytosolic small ribosomal subunit"/>
    <property type="evidence" value="ECO:0007669"/>
    <property type="project" value="TreeGrafter"/>
</dbReference>
<dbReference type="GO" id="GO:0003729">
    <property type="term" value="F:mRNA binding"/>
    <property type="evidence" value="ECO:0007669"/>
    <property type="project" value="UniProtKB-UniRule"/>
</dbReference>
<dbReference type="GO" id="GO:0019843">
    <property type="term" value="F:rRNA binding"/>
    <property type="evidence" value="ECO:0007669"/>
    <property type="project" value="UniProtKB-UniRule"/>
</dbReference>
<dbReference type="GO" id="GO:0003735">
    <property type="term" value="F:structural constituent of ribosome"/>
    <property type="evidence" value="ECO:0007669"/>
    <property type="project" value="InterPro"/>
</dbReference>
<dbReference type="GO" id="GO:0006412">
    <property type="term" value="P:translation"/>
    <property type="evidence" value="ECO:0007669"/>
    <property type="project" value="UniProtKB-UniRule"/>
</dbReference>
<dbReference type="CDD" id="cd02412">
    <property type="entry name" value="KH-II_30S_S3"/>
    <property type="match status" value="1"/>
</dbReference>
<dbReference type="FunFam" id="3.30.300.20:FF:000001">
    <property type="entry name" value="30S ribosomal protein S3"/>
    <property type="match status" value="1"/>
</dbReference>
<dbReference type="Gene3D" id="3.30.300.20">
    <property type="match status" value="1"/>
</dbReference>
<dbReference type="Gene3D" id="3.30.1140.32">
    <property type="entry name" value="Ribosomal protein S3, C-terminal domain"/>
    <property type="match status" value="1"/>
</dbReference>
<dbReference type="HAMAP" id="MF_01309_B">
    <property type="entry name" value="Ribosomal_uS3_B"/>
    <property type="match status" value="1"/>
</dbReference>
<dbReference type="InterPro" id="IPR004087">
    <property type="entry name" value="KH_dom"/>
</dbReference>
<dbReference type="InterPro" id="IPR015946">
    <property type="entry name" value="KH_dom-like_a/b"/>
</dbReference>
<dbReference type="InterPro" id="IPR004044">
    <property type="entry name" value="KH_dom_type_2"/>
</dbReference>
<dbReference type="InterPro" id="IPR009019">
    <property type="entry name" value="KH_sf_prok-type"/>
</dbReference>
<dbReference type="InterPro" id="IPR036419">
    <property type="entry name" value="Ribosomal_S3_C_sf"/>
</dbReference>
<dbReference type="InterPro" id="IPR005704">
    <property type="entry name" value="Ribosomal_uS3_bac-typ"/>
</dbReference>
<dbReference type="InterPro" id="IPR001351">
    <property type="entry name" value="Ribosomal_uS3_C"/>
</dbReference>
<dbReference type="InterPro" id="IPR018280">
    <property type="entry name" value="Ribosomal_uS3_CS"/>
</dbReference>
<dbReference type="NCBIfam" id="TIGR01009">
    <property type="entry name" value="rpsC_bact"/>
    <property type="match status" value="1"/>
</dbReference>
<dbReference type="PANTHER" id="PTHR11760">
    <property type="entry name" value="30S/40S RIBOSOMAL PROTEIN S3"/>
    <property type="match status" value="1"/>
</dbReference>
<dbReference type="PANTHER" id="PTHR11760:SF19">
    <property type="entry name" value="SMALL RIBOSOMAL SUBUNIT PROTEIN US3C"/>
    <property type="match status" value="1"/>
</dbReference>
<dbReference type="Pfam" id="PF07650">
    <property type="entry name" value="KH_2"/>
    <property type="match status" value="1"/>
</dbReference>
<dbReference type="Pfam" id="PF00189">
    <property type="entry name" value="Ribosomal_S3_C"/>
    <property type="match status" value="1"/>
</dbReference>
<dbReference type="SMART" id="SM00322">
    <property type="entry name" value="KH"/>
    <property type="match status" value="1"/>
</dbReference>
<dbReference type="SUPFAM" id="SSF54814">
    <property type="entry name" value="Prokaryotic type KH domain (KH-domain type II)"/>
    <property type="match status" value="1"/>
</dbReference>
<dbReference type="SUPFAM" id="SSF54821">
    <property type="entry name" value="Ribosomal protein S3 C-terminal domain"/>
    <property type="match status" value="1"/>
</dbReference>
<dbReference type="PROSITE" id="PS50823">
    <property type="entry name" value="KH_TYPE_2"/>
    <property type="match status" value="1"/>
</dbReference>
<dbReference type="PROSITE" id="PS00548">
    <property type="entry name" value="RIBOSOMAL_S3"/>
    <property type="match status" value="1"/>
</dbReference>
<evidence type="ECO:0000255" key="1">
    <source>
        <dbReference type="HAMAP-Rule" id="MF_01309"/>
    </source>
</evidence>
<evidence type="ECO:0000305" key="2"/>
<organism>
    <name type="scientific">Phytoplasma australiense</name>
    <dbReference type="NCBI Taxonomy" id="59748"/>
    <lineage>
        <taxon>Bacteria</taxon>
        <taxon>Bacillati</taxon>
        <taxon>Mycoplasmatota</taxon>
        <taxon>Mollicutes</taxon>
        <taxon>Acholeplasmatales</taxon>
        <taxon>Acholeplasmataceae</taxon>
        <taxon>Candidatus Phytoplasma</taxon>
        <taxon>16SrXII (Stolbur group)</taxon>
    </lineage>
</organism>
<name>RS3_PHYAS</name>
<reference key="1">
    <citation type="journal article" date="2008" name="J. Bacteriol.">
        <title>Comparative genome analysis of 'Candidatus Phytoplasma australiense' (subgroup tuf-Australia I; rp-A) and 'Ca. Phytoplasma asteris' strains OY-M and AY-WB.</title>
        <authorList>
            <person name="Tran-Nguyen L.T."/>
            <person name="Kube M."/>
            <person name="Schneider B."/>
            <person name="Reinhardt R."/>
            <person name="Gibb K.S."/>
        </authorList>
    </citation>
    <scope>NUCLEOTIDE SEQUENCE [LARGE SCALE GENOMIC DNA]</scope>
</reference>
<proteinExistence type="inferred from homology"/>
<accession>B1VAE2</accession>
<keyword id="KW-1185">Reference proteome</keyword>
<keyword id="KW-0687">Ribonucleoprotein</keyword>
<keyword id="KW-0689">Ribosomal protein</keyword>
<keyword id="KW-0694">RNA-binding</keyword>
<keyword id="KW-0699">rRNA-binding</keyword>
<protein>
    <recommendedName>
        <fullName evidence="1">Small ribosomal subunit protein uS3</fullName>
    </recommendedName>
    <alternativeName>
        <fullName evidence="2">30S ribosomal protein S3</fullName>
    </alternativeName>
</protein>